<organism>
    <name type="scientific">Pylaiella littoralis</name>
    <name type="common">Seaweed</name>
    <name type="synonym">Conferva littoralis</name>
    <dbReference type="NCBI Taxonomy" id="2885"/>
    <lineage>
        <taxon>Eukaryota</taxon>
        <taxon>Sar</taxon>
        <taxon>Stramenopiles</taxon>
        <taxon>Ochrophyta</taxon>
        <taxon>PX clade</taxon>
        <taxon>Phaeophyceae</taxon>
        <taxon>Ectocarpales</taxon>
        <taxon>Acinetosporaceae</taxon>
        <taxon>Pylaiella</taxon>
    </lineage>
</organism>
<sequence>MSLNIRVIAPDGLIWDTTAEGVVLPSLTGQLGILTGHAPLITSLEIGILRIKTNSKWTPIIVLGGFAVIKDDEVLVLISGVEEVIKEDYSKAKSILAKAKIDLDSAKTTKEIIDASQELKIASAKVKAFKFI</sequence>
<protein>
    <recommendedName>
        <fullName evidence="1">ATP synthase epsilon chain, chloroplastic</fullName>
    </recommendedName>
    <alternativeName>
        <fullName evidence="1">ATP synthase F1 sector epsilon subunit</fullName>
    </alternativeName>
    <alternativeName>
        <fullName evidence="1">F-ATPase epsilon subunit</fullName>
    </alternativeName>
</protein>
<keyword id="KW-0066">ATP synthesis</keyword>
<keyword id="KW-0139">CF(1)</keyword>
<keyword id="KW-0150">Chloroplast</keyword>
<keyword id="KW-0375">Hydrogen ion transport</keyword>
<keyword id="KW-0406">Ion transport</keyword>
<keyword id="KW-0472">Membrane</keyword>
<keyword id="KW-0934">Plastid</keyword>
<keyword id="KW-0793">Thylakoid</keyword>
<keyword id="KW-0813">Transport</keyword>
<evidence type="ECO:0000255" key="1">
    <source>
        <dbReference type="HAMAP-Rule" id="MF_00530"/>
    </source>
</evidence>
<dbReference type="EMBL" id="X60329">
    <property type="protein sequence ID" value="CAA42900.1"/>
    <property type="molecule type" value="Genomic_DNA"/>
</dbReference>
<dbReference type="PIR" id="S20849">
    <property type="entry name" value="PWPFEL"/>
</dbReference>
<dbReference type="SMR" id="P26534"/>
<dbReference type="GO" id="GO:0009535">
    <property type="term" value="C:chloroplast thylakoid membrane"/>
    <property type="evidence" value="ECO:0007669"/>
    <property type="project" value="UniProtKB-SubCell"/>
</dbReference>
<dbReference type="GO" id="GO:0045259">
    <property type="term" value="C:proton-transporting ATP synthase complex"/>
    <property type="evidence" value="ECO:0007669"/>
    <property type="project" value="UniProtKB-KW"/>
</dbReference>
<dbReference type="GO" id="GO:0005524">
    <property type="term" value="F:ATP binding"/>
    <property type="evidence" value="ECO:0007669"/>
    <property type="project" value="UniProtKB-UniRule"/>
</dbReference>
<dbReference type="GO" id="GO:0046933">
    <property type="term" value="F:proton-transporting ATP synthase activity, rotational mechanism"/>
    <property type="evidence" value="ECO:0007669"/>
    <property type="project" value="UniProtKB-UniRule"/>
</dbReference>
<dbReference type="CDD" id="cd12152">
    <property type="entry name" value="F1-ATPase_delta"/>
    <property type="match status" value="1"/>
</dbReference>
<dbReference type="Gene3D" id="2.60.15.10">
    <property type="entry name" value="F0F1 ATP synthase delta/epsilon subunit, N-terminal"/>
    <property type="match status" value="1"/>
</dbReference>
<dbReference type="HAMAP" id="MF_00530">
    <property type="entry name" value="ATP_synth_epsil_bac"/>
    <property type="match status" value="1"/>
</dbReference>
<dbReference type="InterPro" id="IPR001469">
    <property type="entry name" value="ATP_synth_F1_dsu/esu"/>
</dbReference>
<dbReference type="InterPro" id="IPR020546">
    <property type="entry name" value="ATP_synth_F1_dsu/esu_N"/>
</dbReference>
<dbReference type="InterPro" id="IPR036771">
    <property type="entry name" value="ATPsynth_dsu/esu_N"/>
</dbReference>
<dbReference type="NCBIfam" id="TIGR01216">
    <property type="entry name" value="ATP_synt_epsi"/>
    <property type="match status" value="1"/>
</dbReference>
<dbReference type="PANTHER" id="PTHR13822">
    <property type="entry name" value="ATP SYNTHASE DELTA/EPSILON CHAIN"/>
    <property type="match status" value="1"/>
</dbReference>
<dbReference type="PANTHER" id="PTHR13822:SF10">
    <property type="entry name" value="ATP SYNTHASE EPSILON CHAIN, CHLOROPLASTIC"/>
    <property type="match status" value="1"/>
</dbReference>
<dbReference type="Pfam" id="PF02823">
    <property type="entry name" value="ATP-synt_DE_N"/>
    <property type="match status" value="1"/>
</dbReference>
<dbReference type="SUPFAM" id="SSF51344">
    <property type="entry name" value="Epsilon subunit of F1F0-ATP synthase N-terminal domain"/>
    <property type="match status" value="1"/>
</dbReference>
<feature type="chain" id="PRO_0000188291" description="ATP synthase epsilon chain, chloroplastic">
    <location>
        <begin position="1"/>
        <end position="132"/>
    </location>
</feature>
<comment type="function">
    <text evidence="1">Produces ATP from ADP in the presence of a proton gradient across the membrane.</text>
</comment>
<comment type="subunit">
    <text evidence="1">F-type ATPases have 2 components, CF(1) - the catalytic core - and CF(0) - the membrane proton channel. CF(1) has five subunits: alpha(3), beta(3), gamma(1), delta(1), epsilon(1). CF(0) has three main subunits: a, b and c.</text>
</comment>
<comment type="subcellular location">
    <subcellularLocation>
        <location evidence="1">Plastid</location>
        <location evidence="1">Chloroplast thylakoid membrane</location>
        <topology evidence="1">Peripheral membrane protein</topology>
    </subcellularLocation>
</comment>
<comment type="similarity">
    <text evidence="1">Belongs to the ATPase epsilon chain family.</text>
</comment>
<accession>P26534</accession>
<proteinExistence type="inferred from homology"/>
<name>ATPE_PYLLI</name>
<reference key="1">
    <citation type="journal article" date="1992" name="Plant Mol. Biol.">
        <title>Nucleotide sequences of the atpB and the atpE genes of the brown alga Pylaiella littoralis (L.) Kjellm.</title>
        <authorList>
            <person name="Jouannic S."/>
            <person name="Kerbourc'H C."/>
            <person name="Kloareg B."/>
            <person name="Loiseaux-De Goer S."/>
        </authorList>
    </citation>
    <scope>NUCLEOTIDE SEQUENCE [GENOMIC DNA]</scope>
</reference>
<geneLocation type="chloroplast"/>
<gene>
    <name evidence="1" type="primary">atpE</name>
</gene>